<sequence>MRLLQLLFRASPATLLLVLCLQLGANKAQDNTRKIIIKNFDIPKSVRPNDEVTAVLAVQTELKECMVVKTYLISSVPLQGAFNYKYTACLCDDNPKTFYWDFYANRTVQIAAVIDVIQELGICPDDAAVIPIKNNRFYTTEILEVE</sequence>
<gene>
    <name type="primary">PIP</name>
</gene>
<comment type="subunit">
    <text evidence="1">Monomer. Interacts with AZGP1 (By similarity).</text>
</comment>
<comment type="subcellular location">
    <subcellularLocation>
        <location evidence="1">Secreted</location>
    </subcellularLocation>
</comment>
<comment type="similarity">
    <text evidence="5">Belongs to the PIP family.</text>
</comment>
<evidence type="ECO:0000250" key="1"/>
<evidence type="ECO:0000250" key="2">
    <source>
        <dbReference type="UniProtKB" id="P12273"/>
    </source>
</evidence>
<evidence type="ECO:0000255" key="3"/>
<evidence type="ECO:0000269" key="4">
    <source>
    </source>
</evidence>
<evidence type="ECO:0000305" key="5"/>
<organism>
    <name type="scientific">Gorilla gorilla gorilla</name>
    <name type="common">Western lowland gorilla</name>
    <dbReference type="NCBI Taxonomy" id="9595"/>
    <lineage>
        <taxon>Eukaryota</taxon>
        <taxon>Metazoa</taxon>
        <taxon>Chordata</taxon>
        <taxon>Craniata</taxon>
        <taxon>Vertebrata</taxon>
        <taxon>Euteleostomi</taxon>
        <taxon>Mammalia</taxon>
        <taxon>Eutheria</taxon>
        <taxon>Euarchontoglires</taxon>
        <taxon>Primates</taxon>
        <taxon>Haplorrhini</taxon>
        <taxon>Catarrhini</taxon>
        <taxon>Hominidae</taxon>
        <taxon>Gorilla</taxon>
    </lineage>
</organism>
<keyword id="KW-1015">Disulfide bond</keyword>
<keyword id="KW-0325">Glycoprotein</keyword>
<keyword id="KW-0873">Pyrrolidone carboxylic acid</keyword>
<keyword id="KW-1185">Reference proteome</keyword>
<keyword id="KW-0964">Secreted</keyword>
<keyword id="KW-0732">Signal</keyword>
<dbReference type="EMBL" id="AB251901">
    <property type="protein sequence ID" value="BAF35621.1"/>
    <property type="molecule type" value="Genomic_DNA"/>
</dbReference>
<dbReference type="EMBL" id="AB251902">
    <property type="protein sequence ID" value="BAF35622.1"/>
    <property type="molecule type" value="Genomic_DNA"/>
</dbReference>
<dbReference type="EMBL" id="AB251903">
    <property type="protein sequence ID" value="BAF35623.1"/>
    <property type="molecule type" value="Genomic_DNA"/>
</dbReference>
<dbReference type="RefSeq" id="XP_004046436.1">
    <property type="nucleotide sequence ID" value="XM_004046388.3"/>
</dbReference>
<dbReference type="SMR" id="A0A885"/>
<dbReference type="FunCoup" id="A0A885">
    <property type="interactions" value="341"/>
</dbReference>
<dbReference type="STRING" id="9593.ENSGGOP00000021000"/>
<dbReference type="GlyCosmos" id="A0A885">
    <property type="glycosylation" value="1 site, No reported glycans"/>
</dbReference>
<dbReference type="Ensembl" id="ENSGGOT00000027049.2">
    <property type="protein sequence ID" value="ENSGGOP00000021000.1"/>
    <property type="gene ID" value="ENSGGOG00000022725.2"/>
</dbReference>
<dbReference type="GeneID" id="101154336"/>
<dbReference type="KEGG" id="ggo:101154336"/>
<dbReference type="CTD" id="5304"/>
<dbReference type="eggNOG" id="ENOG502T2PG">
    <property type="taxonomic scope" value="Eukaryota"/>
</dbReference>
<dbReference type="GeneTree" id="ENSGT00390000002099"/>
<dbReference type="HOGENOM" id="CLU_148761_0_0_1"/>
<dbReference type="InParanoid" id="A0A885"/>
<dbReference type="OMA" id="ECMVIKT"/>
<dbReference type="OrthoDB" id="4328at9604"/>
<dbReference type="Proteomes" id="UP000001519">
    <property type="component" value="Chromosome 7"/>
</dbReference>
<dbReference type="GO" id="GO:0005615">
    <property type="term" value="C:extracellular space"/>
    <property type="evidence" value="ECO:0000318"/>
    <property type="project" value="GO_Central"/>
</dbReference>
<dbReference type="GO" id="GO:0005634">
    <property type="term" value="C:nucleus"/>
    <property type="evidence" value="ECO:0007669"/>
    <property type="project" value="Ensembl"/>
</dbReference>
<dbReference type="GO" id="GO:0004190">
    <property type="term" value="F:aspartic-type endopeptidase activity"/>
    <property type="evidence" value="ECO:0000318"/>
    <property type="project" value="GO_Central"/>
</dbReference>
<dbReference type="GO" id="GO:0042802">
    <property type="term" value="F:identical protein binding"/>
    <property type="evidence" value="ECO:0007669"/>
    <property type="project" value="Ensembl"/>
</dbReference>
<dbReference type="GO" id="GO:0019864">
    <property type="term" value="F:IgG binding"/>
    <property type="evidence" value="ECO:0007669"/>
    <property type="project" value="Ensembl"/>
</dbReference>
<dbReference type="GO" id="GO:0001580">
    <property type="term" value="P:detection of chemical stimulus involved in sensory perception of bitter taste"/>
    <property type="evidence" value="ECO:0007669"/>
    <property type="project" value="Ensembl"/>
</dbReference>
<dbReference type="GO" id="GO:0070233">
    <property type="term" value="P:negative regulation of T cell apoptotic process"/>
    <property type="evidence" value="ECO:0007669"/>
    <property type="project" value="Ensembl"/>
</dbReference>
<dbReference type="GO" id="GO:0010628">
    <property type="term" value="P:positive regulation of gene expression"/>
    <property type="evidence" value="ECO:0007669"/>
    <property type="project" value="Ensembl"/>
</dbReference>
<dbReference type="GO" id="GO:0006508">
    <property type="term" value="P:proteolysis"/>
    <property type="evidence" value="ECO:0000318"/>
    <property type="project" value="GO_Central"/>
</dbReference>
<dbReference type="GO" id="GO:0002682">
    <property type="term" value="P:regulation of immune system process"/>
    <property type="evidence" value="ECO:0000318"/>
    <property type="project" value="GO_Central"/>
</dbReference>
<dbReference type="FunFam" id="2.60.40.10:FF:001572">
    <property type="entry name" value="Prolactin-inducible protein homolog"/>
    <property type="match status" value="1"/>
</dbReference>
<dbReference type="Gene3D" id="2.60.40.10">
    <property type="entry name" value="Immunoglobulins"/>
    <property type="match status" value="1"/>
</dbReference>
<dbReference type="InterPro" id="IPR013783">
    <property type="entry name" value="Ig-like_fold"/>
</dbReference>
<dbReference type="InterPro" id="IPR014756">
    <property type="entry name" value="Ig_E-set"/>
</dbReference>
<dbReference type="InterPro" id="IPR007990">
    <property type="entry name" value="PIP"/>
</dbReference>
<dbReference type="PANTHER" id="PTHR15096:SF5">
    <property type="entry name" value="PROLACTIN-INDUCIBLE PROTEIN"/>
    <property type="match status" value="1"/>
</dbReference>
<dbReference type="PANTHER" id="PTHR15096">
    <property type="entry name" value="PROLACTIN-INDUCIBLE PROTEIN/SEMINAL VESICLE ANTIGEN"/>
    <property type="match status" value="1"/>
</dbReference>
<dbReference type="Pfam" id="PF05326">
    <property type="entry name" value="SVA"/>
    <property type="match status" value="1"/>
</dbReference>
<dbReference type="PIRSF" id="PIRSF002572">
    <property type="entry name" value="PIP-GCDFP-15"/>
    <property type="match status" value="1"/>
</dbReference>
<dbReference type="SUPFAM" id="SSF81296">
    <property type="entry name" value="E set domains"/>
    <property type="match status" value="1"/>
</dbReference>
<proteinExistence type="inferred from homology"/>
<accession>A0A885</accession>
<accession>A0A887</accession>
<reference key="1">
    <citation type="journal article" date="2006" name="Gene">
        <title>Origin and evolution of gene for prolactin-induced protein.</title>
        <authorList>
            <person name="Kitano T."/>
            <person name="Tian W."/>
            <person name="Umetsu K."/>
            <person name="Yuasa I."/>
            <person name="Yamazaki K."/>
            <person name="Saitou N."/>
            <person name="Osawa M."/>
        </authorList>
    </citation>
    <scope>NUCLEOTIDE SEQUENCE [GENOMIC DNA]</scope>
    <scope>VARIANTS ILE-113 AND ARG-118</scope>
    <source>
        <strain>Isolate T025</strain>
        <strain>Isolate T026</strain>
        <strain>Isolate T027</strain>
    </source>
</reference>
<name>PIP_GORGO</name>
<feature type="signal peptide" evidence="1">
    <location>
        <begin position="1"/>
        <end position="28"/>
    </location>
</feature>
<feature type="chain" id="PRO_0000273194" description="Prolactin-inducible protein homolog">
    <location>
        <begin position="29"/>
        <end position="146"/>
    </location>
</feature>
<feature type="modified residue" description="Pyrrolidone carboxylic acid" evidence="2">
    <location>
        <position position="29"/>
    </location>
</feature>
<feature type="glycosylation site" description="N-linked (GlcNAc...) asparagine" evidence="3">
    <location>
        <position position="105"/>
    </location>
</feature>
<feature type="disulfide bond" evidence="1">
    <location>
        <begin position="65"/>
        <end position="91"/>
    </location>
</feature>
<feature type="disulfide bond" evidence="1">
    <location>
        <begin position="89"/>
        <end position="123"/>
    </location>
</feature>
<feature type="sequence variant" id="VAR_030099" evidence="4">
    <original>V</original>
    <variation>I</variation>
    <location>
        <position position="113"/>
    </location>
</feature>
<feature type="sequence variant" id="VAR_030100" evidence="4">
    <original>Q</original>
    <variation>R</variation>
    <location>
        <position position="118"/>
    </location>
</feature>
<protein>
    <recommendedName>
        <fullName>Prolactin-inducible protein homolog</fullName>
    </recommendedName>
    <alternativeName>
        <fullName>Prolactin-induced protein</fullName>
    </alternativeName>
</protein>